<feature type="transit peptide" description="Mitochondrion" evidence="1">
    <location>
        <begin position="1"/>
        <end position="25"/>
    </location>
</feature>
<feature type="chain" id="PRO_0000318693" description="ATP synthase subunit s, mitochondrial">
    <location>
        <begin position="26"/>
        <end position="200"/>
    </location>
</feature>
<feature type="repeat" description="LRR 1" evidence="1">
    <location>
        <begin position="62"/>
        <end position="87"/>
    </location>
</feature>
<feature type="repeat" description="LRR 2" evidence="1">
    <location>
        <begin position="88"/>
        <end position="116"/>
    </location>
</feature>
<feature type="repeat" description="LRR 3" evidence="1">
    <location>
        <begin position="117"/>
        <end position="141"/>
    </location>
</feature>
<feature type="repeat" description="LRR 4" evidence="1">
    <location>
        <begin position="142"/>
        <end position="173"/>
    </location>
</feature>
<feature type="region of interest" description="N-terminal domain" evidence="1">
    <location>
        <begin position="1"/>
        <end position="61"/>
    </location>
</feature>
<feature type="binding site" evidence="1">
    <location>
        <position position="59"/>
    </location>
    <ligand>
        <name>Mg(2+)</name>
        <dbReference type="ChEBI" id="CHEBI:18420"/>
    </ligand>
</feature>
<feature type="binding site" evidence="1">
    <location>
        <position position="93"/>
    </location>
    <ligand>
        <name>Mg(2+)</name>
        <dbReference type="ChEBI" id="CHEBI:18420"/>
    </ligand>
</feature>
<proteinExistence type="evidence at transcript level"/>
<evidence type="ECO:0000250" key="1">
    <source>
        <dbReference type="UniProtKB" id="P22027"/>
    </source>
</evidence>
<evidence type="ECO:0000250" key="2">
    <source>
        <dbReference type="UniProtKB" id="Q99766"/>
    </source>
</evidence>
<evidence type="ECO:0000305" key="3"/>
<accession>Q4R5S4</accession>
<dbReference type="EMBL" id="AB169469">
    <property type="protein sequence ID" value="BAE01551.1"/>
    <property type="molecule type" value="mRNA"/>
</dbReference>
<dbReference type="SMR" id="Q4R5S4"/>
<dbReference type="STRING" id="9541.ENSMFAP00000029724"/>
<dbReference type="eggNOG" id="KOG3864">
    <property type="taxonomic scope" value="Eukaryota"/>
</dbReference>
<dbReference type="Proteomes" id="UP000233100">
    <property type="component" value="Unplaced"/>
</dbReference>
<dbReference type="GO" id="GO:0005743">
    <property type="term" value="C:mitochondrial inner membrane"/>
    <property type="evidence" value="ECO:0007669"/>
    <property type="project" value="UniProtKB-SubCell"/>
</dbReference>
<dbReference type="GO" id="GO:0045259">
    <property type="term" value="C:proton-transporting ATP synthase complex"/>
    <property type="evidence" value="ECO:0007669"/>
    <property type="project" value="UniProtKB-KW"/>
</dbReference>
<dbReference type="GO" id="GO:0046872">
    <property type="term" value="F:metal ion binding"/>
    <property type="evidence" value="ECO:0007669"/>
    <property type="project" value="UniProtKB-KW"/>
</dbReference>
<dbReference type="GO" id="GO:0006754">
    <property type="term" value="P:ATP biosynthetic process"/>
    <property type="evidence" value="ECO:0007669"/>
    <property type="project" value="UniProtKB-KW"/>
</dbReference>
<dbReference type="GO" id="GO:1902600">
    <property type="term" value="P:proton transmembrane transport"/>
    <property type="evidence" value="ECO:0007669"/>
    <property type="project" value="UniProtKB-KW"/>
</dbReference>
<dbReference type="FunFam" id="3.80.10.10:FF:000216">
    <property type="entry name" value="ATP synthase subunit s, mitochondrial isoform X1"/>
    <property type="match status" value="1"/>
</dbReference>
<dbReference type="Gene3D" id="3.80.10.10">
    <property type="entry name" value="Ribonuclease Inhibitor"/>
    <property type="match status" value="1"/>
</dbReference>
<dbReference type="InterPro" id="IPR032675">
    <property type="entry name" value="LRR_dom_sf"/>
</dbReference>
<dbReference type="SUPFAM" id="SSF52047">
    <property type="entry name" value="RNI-like"/>
    <property type="match status" value="1"/>
</dbReference>
<organism>
    <name type="scientific">Macaca fascicularis</name>
    <name type="common">Crab-eating macaque</name>
    <name type="synonym">Cynomolgus monkey</name>
    <dbReference type="NCBI Taxonomy" id="9541"/>
    <lineage>
        <taxon>Eukaryota</taxon>
        <taxon>Metazoa</taxon>
        <taxon>Chordata</taxon>
        <taxon>Craniata</taxon>
        <taxon>Vertebrata</taxon>
        <taxon>Euteleostomi</taxon>
        <taxon>Mammalia</taxon>
        <taxon>Eutheria</taxon>
        <taxon>Euarchontoglires</taxon>
        <taxon>Primates</taxon>
        <taxon>Haplorrhini</taxon>
        <taxon>Catarrhini</taxon>
        <taxon>Cercopithecidae</taxon>
        <taxon>Cercopithecinae</taxon>
        <taxon>Macaca</taxon>
    </lineage>
</organism>
<protein>
    <recommendedName>
        <fullName>ATP synthase subunit s, mitochondrial</fullName>
    </recommendedName>
    <alternativeName>
        <fullName>ATP synthase-coupling factor B</fullName>
        <shortName>FB</shortName>
    </alternativeName>
    <alternativeName>
        <fullName evidence="2">Distal membrane arm assembly complex 2-like protein</fullName>
    </alternativeName>
    <alternativeName>
        <fullName>Mitochondrial ATP synthase regulatory component factor B</fullName>
    </alternativeName>
</protein>
<gene>
    <name type="primary">DMAC2L</name>
    <name type="synonym">ATP5S</name>
    <name type="ORF">QtsA-21272</name>
</gene>
<reference key="1">
    <citation type="submission" date="2005-06" db="EMBL/GenBank/DDBJ databases">
        <title>DNA sequences of macaque genes expressed in brain or testis and its evolutionary implications.</title>
        <authorList>
            <consortium name="International consortium for macaque cDNA sequencing and analysis"/>
        </authorList>
    </citation>
    <scope>NUCLEOTIDE SEQUENCE [LARGE SCALE MRNA]</scope>
    <source>
        <tissue>Testis</tissue>
    </source>
</reference>
<name>ATP5S_MACFA</name>
<sequence length="200" mass="23140">MMLFGKVSQQLCGIKKLPWSCDSRYFWGWLNAVFNKVDYDRIRDVGPDRAASEWLLRCGAMVRYHGQERWQTDYNHLPTGPLDKYKIQAIDATNSCIMSIGFDHMVGLQHVEKIRLCKCHFIEDDCLLRLGQLENLQKSILEMEIISCGNITDKGIIASRHLRNLKYLLLSDLPGVREKENLIQVFETALPSLELKLQLK</sequence>
<keyword id="KW-0066">ATP synthesis</keyword>
<keyword id="KW-0138">CF(0)</keyword>
<keyword id="KW-0375">Hydrogen ion transport</keyword>
<keyword id="KW-0406">Ion transport</keyword>
<keyword id="KW-0433">Leucine-rich repeat</keyword>
<keyword id="KW-0460">Magnesium</keyword>
<keyword id="KW-0472">Membrane</keyword>
<keyword id="KW-0479">Metal-binding</keyword>
<keyword id="KW-0496">Mitochondrion</keyword>
<keyword id="KW-0999">Mitochondrion inner membrane</keyword>
<keyword id="KW-1185">Reference proteome</keyword>
<keyword id="KW-0677">Repeat</keyword>
<keyword id="KW-0809">Transit peptide</keyword>
<keyword id="KW-0813">Transport</keyword>
<comment type="function">
    <text evidence="1">Involved in regulation of mitochondrial membrane ATP synthase. Necessary for H(+) conduction of ATP synthase. Facilitates energy-driven catalysis of ATP synthesis by blocking a proton leak through an alternative proton exit pathway.</text>
</comment>
<comment type="subunit">
    <text evidence="1">Homotetramer. Associates with ATP synthase.</text>
</comment>
<comment type="subcellular location">
    <subcellularLocation>
        <location evidence="1">Mitochondrion</location>
    </subcellularLocation>
    <subcellularLocation>
        <location evidence="1">Mitochondrion inner membrane</location>
    </subcellularLocation>
</comment>
<comment type="similarity">
    <text evidence="3">Belongs to the ATP synthase subunit s family.</text>
</comment>